<sequence>MYRVAIVGRPNVGKSSLFNRIIGKRKAIVEDIPGVTRDRIVSTAEWRGVTFEVVDTGGYIESDKDTFAPYIRKQIEKELELSDAFILVVDGKEGLTPADKEIARILHRTDKPVYVAVNKIDNPEMEKAIYEFYELGFEKVFPVSSIQKYGVADLLDAVVQDIPEYEREASKEVGEKEEKSDVIKVAIVGKPNAGKSSLLNAILGEERAVVSEIPGTTRDVVDTLFEWKDQKFLFLDTAGLRKKSKVDYGIEFFSIGRTLDAIKKADVIVHVIDAQQGATEQDTKIAHLIQKYTKPAVIVINKIDTVPPKSEVLNRIKNQVRERLYFIPYAPIVMTSAKNRKGIKQLLKEITDVYNQSWKRVGTGQLNRAIKQILSLRQPPSYHGKPLKIYYATQLEGKPPCFLLFVNHPEGFKEHFLRFLENNLRTVLGFEKAPIKLLLRGKEERRD</sequence>
<comment type="function">
    <text evidence="1">GTPase that plays an essential role in the late steps of ribosome biogenesis.</text>
</comment>
<comment type="subunit">
    <text evidence="1">Associates with the 50S ribosomal subunit.</text>
</comment>
<comment type="similarity">
    <text evidence="1">Belongs to the TRAFAC class TrmE-Era-EngA-EngB-Septin-like GTPase superfamily. EngA (Der) GTPase family.</text>
</comment>
<dbReference type="EMBL" id="CP001230">
    <property type="protein sequence ID" value="ACO03928.1"/>
    <property type="molecule type" value="Genomic_DNA"/>
</dbReference>
<dbReference type="RefSeq" id="WP_012676167.1">
    <property type="nucleotide sequence ID" value="NC_012440.1"/>
</dbReference>
<dbReference type="SMR" id="C0QT02"/>
<dbReference type="STRING" id="123214.PERMA_0019"/>
<dbReference type="PaxDb" id="123214-PERMA_0019"/>
<dbReference type="KEGG" id="pmx:PERMA_0019"/>
<dbReference type="eggNOG" id="COG1160">
    <property type="taxonomic scope" value="Bacteria"/>
</dbReference>
<dbReference type="HOGENOM" id="CLU_016077_6_2_0"/>
<dbReference type="OrthoDB" id="9805918at2"/>
<dbReference type="Proteomes" id="UP000001366">
    <property type="component" value="Chromosome"/>
</dbReference>
<dbReference type="GO" id="GO:0005525">
    <property type="term" value="F:GTP binding"/>
    <property type="evidence" value="ECO:0007669"/>
    <property type="project" value="UniProtKB-UniRule"/>
</dbReference>
<dbReference type="GO" id="GO:0043022">
    <property type="term" value="F:ribosome binding"/>
    <property type="evidence" value="ECO:0007669"/>
    <property type="project" value="TreeGrafter"/>
</dbReference>
<dbReference type="GO" id="GO:0042254">
    <property type="term" value="P:ribosome biogenesis"/>
    <property type="evidence" value="ECO:0007669"/>
    <property type="project" value="UniProtKB-KW"/>
</dbReference>
<dbReference type="CDD" id="cd01894">
    <property type="entry name" value="EngA1"/>
    <property type="match status" value="1"/>
</dbReference>
<dbReference type="CDD" id="cd01895">
    <property type="entry name" value="EngA2"/>
    <property type="match status" value="1"/>
</dbReference>
<dbReference type="FunFam" id="3.30.300.20:FF:000004">
    <property type="entry name" value="GTPase Der"/>
    <property type="match status" value="1"/>
</dbReference>
<dbReference type="FunFam" id="3.40.50.300:FF:000040">
    <property type="entry name" value="GTPase Der"/>
    <property type="match status" value="1"/>
</dbReference>
<dbReference type="FunFam" id="3.40.50.300:FF:000057">
    <property type="entry name" value="GTPase Der"/>
    <property type="match status" value="1"/>
</dbReference>
<dbReference type="Gene3D" id="3.30.300.20">
    <property type="match status" value="1"/>
</dbReference>
<dbReference type="Gene3D" id="3.40.50.300">
    <property type="entry name" value="P-loop containing nucleotide triphosphate hydrolases"/>
    <property type="match status" value="2"/>
</dbReference>
<dbReference type="HAMAP" id="MF_00195">
    <property type="entry name" value="GTPase_Der"/>
    <property type="match status" value="1"/>
</dbReference>
<dbReference type="InterPro" id="IPR031166">
    <property type="entry name" value="G_ENGA"/>
</dbReference>
<dbReference type="InterPro" id="IPR006073">
    <property type="entry name" value="GTP-bd"/>
</dbReference>
<dbReference type="InterPro" id="IPR016484">
    <property type="entry name" value="GTPase_Der"/>
</dbReference>
<dbReference type="InterPro" id="IPR032859">
    <property type="entry name" value="KH_dom-like"/>
</dbReference>
<dbReference type="InterPro" id="IPR015946">
    <property type="entry name" value="KH_dom-like_a/b"/>
</dbReference>
<dbReference type="InterPro" id="IPR027417">
    <property type="entry name" value="P-loop_NTPase"/>
</dbReference>
<dbReference type="InterPro" id="IPR005225">
    <property type="entry name" value="Small_GTP-bd"/>
</dbReference>
<dbReference type="NCBIfam" id="TIGR03594">
    <property type="entry name" value="GTPase_EngA"/>
    <property type="match status" value="1"/>
</dbReference>
<dbReference type="NCBIfam" id="TIGR00231">
    <property type="entry name" value="small_GTP"/>
    <property type="match status" value="2"/>
</dbReference>
<dbReference type="PANTHER" id="PTHR43834">
    <property type="entry name" value="GTPASE DER"/>
    <property type="match status" value="1"/>
</dbReference>
<dbReference type="PANTHER" id="PTHR43834:SF6">
    <property type="entry name" value="GTPASE DER"/>
    <property type="match status" value="1"/>
</dbReference>
<dbReference type="Pfam" id="PF14714">
    <property type="entry name" value="KH_dom-like"/>
    <property type="match status" value="1"/>
</dbReference>
<dbReference type="Pfam" id="PF01926">
    <property type="entry name" value="MMR_HSR1"/>
    <property type="match status" value="2"/>
</dbReference>
<dbReference type="PIRSF" id="PIRSF006485">
    <property type="entry name" value="GTP-binding_EngA"/>
    <property type="match status" value="1"/>
</dbReference>
<dbReference type="PRINTS" id="PR00326">
    <property type="entry name" value="GTP1OBG"/>
</dbReference>
<dbReference type="SUPFAM" id="SSF52540">
    <property type="entry name" value="P-loop containing nucleoside triphosphate hydrolases"/>
    <property type="match status" value="2"/>
</dbReference>
<dbReference type="PROSITE" id="PS51712">
    <property type="entry name" value="G_ENGA"/>
    <property type="match status" value="2"/>
</dbReference>
<reference key="1">
    <citation type="journal article" date="2009" name="J. Bacteriol.">
        <title>Complete and draft genome sequences of six members of the Aquificales.</title>
        <authorList>
            <person name="Reysenbach A.-L."/>
            <person name="Hamamura N."/>
            <person name="Podar M."/>
            <person name="Griffiths E."/>
            <person name="Ferreira S."/>
            <person name="Hochstein R."/>
            <person name="Heidelberg J."/>
            <person name="Johnson J."/>
            <person name="Mead D."/>
            <person name="Pohorille A."/>
            <person name="Sarmiento M."/>
            <person name="Schweighofer K."/>
            <person name="Seshadri R."/>
            <person name="Voytek M.A."/>
        </authorList>
    </citation>
    <scope>NUCLEOTIDE SEQUENCE [LARGE SCALE GENOMIC DNA]</scope>
    <source>
        <strain>DSM 14350 / EX-H1</strain>
    </source>
</reference>
<name>DER_PERMH</name>
<gene>
    <name evidence="1" type="primary">der</name>
    <name type="synonym">engA</name>
    <name type="ordered locus">PERMA_0019</name>
</gene>
<organism>
    <name type="scientific">Persephonella marina (strain DSM 14350 / EX-H1)</name>
    <dbReference type="NCBI Taxonomy" id="123214"/>
    <lineage>
        <taxon>Bacteria</taxon>
        <taxon>Pseudomonadati</taxon>
        <taxon>Aquificota</taxon>
        <taxon>Aquificia</taxon>
        <taxon>Aquificales</taxon>
        <taxon>Hydrogenothermaceae</taxon>
        <taxon>Persephonella</taxon>
    </lineage>
</organism>
<keyword id="KW-0342">GTP-binding</keyword>
<keyword id="KW-0547">Nucleotide-binding</keyword>
<keyword id="KW-1185">Reference proteome</keyword>
<keyword id="KW-0677">Repeat</keyword>
<keyword id="KW-0690">Ribosome biogenesis</keyword>
<protein>
    <recommendedName>
        <fullName evidence="1">GTPase Der</fullName>
    </recommendedName>
    <alternativeName>
        <fullName evidence="1">GTP-binding protein EngA</fullName>
    </alternativeName>
</protein>
<accession>C0QT02</accession>
<evidence type="ECO:0000255" key="1">
    <source>
        <dbReference type="HAMAP-Rule" id="MF_00195"/>
    </source>
</evidence>
<feature type="chain" id="PRO_1000124366" description="GTPase Der">
    <location>
        <begin position="1"/>
        <end position="447"/>
    </location>
</feature>
<feature type="domain" description="EngA-type G 1">
    <location>
        <begin position="2"/>
        <end position="166"/>
    </location>
</feature>
<feature type="domain" description="EngA-type G 2">
    <location>
        <begin position="183"/>
        <end position="358"/>
    </location>
</feature>
<feature type="domain" description="KH-like" evidence="1">
    <location>
        <begin position="359"/>
        <end position="443"/>
    </location>
</feature>
<feature type="binding site" evidence="1">
    <location>
        <begin position="8"/>
        <end position="15"/>
    </location>
    <ligand>
        <name>GTP</name>
        <dbReference type="ChEBI" id="CHEBI:37565"/>
        <label>1</label>
    </ligand>
</feature>
<feature type="binding site" evidence="1">
    <location>
        <begin position="55"/>
        <end position="59"/>
    </location>
    <ligand>
        <name>GTP</name>
        <dbReference type="ChEBI" id="CHEBI:37565"/>
        <label>1</label>
    </ligand>
</feature>
<feature type="binding site" evidence="1">
    <location>
        <begin position="118"/>
        <end position="121"/>
    </location>
    <ligand>
        <name>GTP</name>
        <dbReference type="ChEBI" id="CHEBI:37565"/>
        <label>1</label>
    </ligand>
</feature>
<feature type="binding site" evidence="1">
    <location>
        <begin position="189"/>
        <end position="196"/>
    </location>
    <ligand>
        <name>GTP</name>
        <dbReference type="ChEBI" id="CHEBI:37565"/>
        <label>2</label>
    </ligand>
</feature>
<feature type="binding site" evidence="1">
    <location>
        <begin position="236"/>
        <end position="240"/>
    </location>
    <ligand>
        <name>GTP</name>
        <dbReference type="ChEBI" id="CHEBI:37565"/>
        <label>2</label>
    </ligand>
</feature>
<feature type="binding site" evidence="1">
    <location>
        <begin position="301"/>
        <end position="304"/>
    </location>
    <ligand>
        <name>GTP</name>
        <dbReference type="ChEBI" id="CHEBI:37565"/>
        <label>2</label>
    </ligand>
</feature>
<proteinExistence type="inferred from homology"/>